<accession>Q6NTF9</accession>
<accession>Q7L534</accession>
<accession>Q9H5W6</accession>
<accession>Q9HBK7</accession>
<accession>Q9UDT2</accession>
<keyword id="KW-0025">Alternative splicing</keyword>
<keyword id="KW-0333">Golgi apparatus</keyword>
<keyword id="KW-0472">Membrane</keyword>
<keyword id="KW-1267">Proteomics identification</keyword>
<keyword id="KW-1185">Reference proteome</keyword>
<keyword id="KW-0812">Transmembrane</keyword>
<keyword id="KW-1133">Transmembrane helix</keyword>
<name>RHBD2_HUMAN</name>
<comment type="interaction">
    <interactant intactId="EBI-17589229">
        <id>Q6NTF9-3</id>
    </interactant>
    <interactant intactId="EBI-348517">
        <id>O95870</id>
        <label>ABHD16A</label>
    </interactant>
    <organismsDiffer>false</organismsDiffer>
    <experiments>3</experiments>
</comment>
<comment type="interaction">
    <interactant intactId="EBI-17589229">
        <id>Q6NTF9-3</id>
    </interactant>
    <interactant intactId="EBI-12562760">
        <id>Q13085-4</id>
        <label>ACACA</label>
    </interactant>
    <organismsDiffer>false</organismsDiffer>
    <experiments>3</experiments>
</comment>
<comment type="interaction">
    <interactant intactId="EBI-17589229">
        <id>Q6NTF9-3</id>
    </interactant>
    <interactant intactId="EBI-2876502">
        <id>Q96CM8</id>
        <label>ACSF2</label>
    </interactant>
    <organismsDiffer>false</organismsDiffer>
    <experiments>3</experiments>
</comment>
<comment type="interaction">
    <interactant intactId="EBI-17589229">
        <id>Q6NTF9-3</id>
    </interactant>
    <interactant intactId="EBI-78035">
        <id>Q07817</id>
        <label>BCL2L1</label>
    </interactant>
    <organismsDiffer>false</organismsDiffer>
    <experiments>3</experiments>
</comment>
<comment type="interaction">
    <interactant intactId="EBI-17589229">
        <id>Q6NTF9-3</id>
    </interactant>
    <interactant intactId="EBI-707714">
        <id>Q92843</id>
        <label>BCL2L2</label>
    </interactant>
    <organismsDiffer>false</organismsDiffer>
    <experiments>3</experiments>
</comment>
<comment type="interaction">
    <interactant intactId="EBI-17589229">
        <id>Q6NTF9-3</id>
    </interactant>
    <interactant intactId="EBI-752069">
        <id>Q9H5X1</id>
        <label>CIAO2A</label>
    </interactant>
    <organismsDiffer>false</organismsDiffer>
    <experiments>3</experiments>
</comment>
<comment type="interaction">
    <interactant intactId="EBI-17589229">
        <id>Q6NTF9-3</id>
    </interactant>
    <interactant intactId="EBI-7062247">
        <id>Q9UHD4</id>
        <label>CIDEB</label>
    </interactant>
    <organismsDiffer>false</organismsDiffer>
    <experiments>3</experiments>
</comment>
<comment type="interaction">
    <interactant intactId="EBI-17589229">
        <id>Q6NTF9-3</id>
    </interactant>
    <interactant intactId="EBI-747133">
        <id>P27658</id>
        <label>COL8A1</label>
    </interactant>
    <organismsDiffer>false</organismsDiffer>
    <experiments>3</experiments>
</comment>
<comment type="interaction">
    <interactant intactId="EBI-17589229">
        <id>Q6NTF9-3</id>
    </interactant>
    <interactant intactId="EBI-372265">
        <id>P21964</id>
        <label>COMT</label>
    </interactant>
    <organismsDiffer>false</organismsDiffer>
    <experiments>3</experiments>
</comment>
<comment type="interaction">
    <interactant intactId="EBI-17589229">
        <id>Q6NTF9-3</id>
    </interactant>
    <interactant intactId="EBI-517508">
        <id>Q9NR28</id>
        <label>DIABLO</label>
    </interactant>
    <organismsDiffer>false</organismsDiffer>
    <experiments>3</experiments>
</comment>
<comment type="interaction">
    <interactant intactId="EBI-17589229">
        <id>Q6NTF9-3</id>
    </interactant>
    <interactant intactId="EBI-17590191">
        <id>Q6P2H7</id>
        <label>DYNC1H1</label>
    </interactant>
    <organismsDiffer>false</organismsDiffer>
    <experiments>3</experiments>
</comment>
<comment type="interaction">
    <interactant intactId="EBI-17589229">
        <id>Q6NTF9-3</id>
    </interactant>
    <interactant intactId="EBI-724839">
        <id>Q14318</id>
        <label>FKBP8</label>
    </interactant>
    <organismsDiffer>false</organismsDiffer>
    <experiments>3</experiments>
</comment>
<comment type="interaction">
    <interactant intactId="EBI-17589229">
        <id>Q6NTF9-3</id>
    </interactant>
    <interactant intactId="EBI-17589491">
        <id>P31512</id>
        <label>FMO4</label>
    </interactant>
    <organismsDiffer>false</organismsDiffer>
    <experiments>3</experiments>
</comment>
<comment type="interaction">
    <interactant intactId="EBI-17589229">
        <id>Q6NTF9-3</id>
    </interactant>
    <interactant intactId="EBI-17590461">
        <id>Q96A11</id>
        <label>GAL3ST3</label>
    </interactant>
    <organismsDiffer>false</organismsDiffer>
    <experiments>3</experiments>
</comment>
<comment type="interaction">
    <interactant intactId="EBI-17589229">
        <id>Q6NTF9-3</id>
    </interactant>
    <interactant intactId="EBI-715444">
        <id>P23434</id>
        <label>GCSH</label>
    </interactant>
    <organismsDiffer>false</organismsDiffer>
    <experiments>3</experiments>
</comment>
<comment type="interaction">
    <interactant intactId="EBI-17589229">
        <id>Q6NTF9-3</id>
    </interactant>
    <interactant intactId="EBI-17590774">
        <id>Q5U4N7</id>
        <label>GDF5-AS1</label>
    </interactant>
    <organismsDiffer>false</organismsDiffer>
    <experiments>3</experiments>
</comment>
<comment type="interaction">
    <interactant intactId="EBI-17589229">
        <id>Q6NTF9-3</id>
    </interactant>
    <interactant intactId="EBI-739467">
        <id>Q9H8Y8</id>
        <label>GORASP2</label>
    </interactant>
    <organismsDiffer>false</organismsDiffer>
    <experiments>3</experiments>
</comment>
<comment type="interaction">
    <interactant intactId="EBI-17589229">
        <id>Q6NTF9-3</id>
    </interactant>
    <interactant intactId="EBI-357986">
        <id>P33778</id>
        <label>H2BC3</label>
    </interactant>
    <organismsDiffer>false</organismsDiffer>
    <experiments>3</experiments>
</comment>
<comment type="interaction">
    <interactant intactId="EBI-17589229">
        <id>Q6NTF9-3</id>
    </interactant>
    <interactant intactId="EBI-10294329">
        <id>Q99525</id>
        <label>H4C7</label>
    </interactant>
    <organismsDiffer>false</organismsDiffer>
    <experiments>3</experiments>
</comment>
<comment type="interaction">
    <interactant intactId="EBI-17589229">
        <id>Q6NTF9-3</id>
    </interactant>
    <interactant intactId="EBI-352682">
        <id>P04792</id>
        <label>HSPB1</label>
    </interactant>
    <organismsDiffer>false</organismsDiffer>
    <experiments>3</experiments>
</comment>
<comment type="interaction">
    <interactant intactId="EBI-17589229">
        <id>Q6NTF9-3</id>
    </interactant>
    <interactant intactId="EBI-17589287">
        <id>Q96BM0</id>
        <label>IFI27L1</label>
    </interactant>
    <organismsDiffer>false</organismsDiffer>
    <experiments>3</experiments>
</comment>
<comment type="interaction">
    <interactant intactId="EBI-17589229">
        <id>Q6NTF9-3</id>
    </interactant>
    <interactant intactId="EBI-2866752">
        <id>P24001</id>
        <label>IL32</label>
    </interactant>
    <organismsDiffer>false</organismsDiffer>
    <experiments>3</experiments>
</comment>
<comment type="interaction">
    <interactant intactId="EBI-17589229">
        <id>Q6NTF9-3</id>
    </interactant>
    <interactant intactId="EBI-10975473">
        <id>O60333-2</id>
        <label>KIF1B</label>
    </interactant>
    <organismsDiffer>false</organismsDiffer>
    <experiments>3</experiments>
</comment>
<comment type="interaction">
    <interactant intactId="EBI-17589229">
        <id>Q6NTF9-3</id>
    </interactant>
    <interactant intactId="EBI-1549822">
        <id>Q6P1Q0</id>
        <label>LETMD1</label>
    </interactant>
    <organismsDiffer>false</organismsDiffer>
    <experiments>3</experiments>
</comment>
<comment type="interaction">
    <interactant intactId="EBI-17589229">
        <id>Q6NTF9-3</id>
    </interactant>
    <interactant intactId="EBI-3911344">
        <id>P27338</id>
        <label>MAOB</label>
    </interactant>
    <organismsDiffer>false</organismsDiffer>
    <experiments>3</experiments>
</comment>
<comment type="interaction">
    <interactant intactId="EBI-17589229">
        <id>Q6NTF9-3</id>
    </interactant>
    <interactant intactId="EBI-2867865">
        <id>Q5VZR4</id>
        <label>MFSD14CP</label>
    </interactant>
    <organismsDiffer>false</organismsDiffer>
    <experiments>3</experiments>
</comment>
<comment type="interaction">
    <interactant intactId="EBI-17589229">
        <id>Q6NTF9-3</id>
    </interactant>
    <interactant intactId="EBI-1053887">
        <id>Q5XKP0</id>
        <label>MICOS13</label>
    </interactant>
    <organismsDiffer>false</organismsDiffer>
    <experiments>3</experiments>
</comment>
<comment type="interaction">
    <interactant intactId="EBI-17589229">
        <id>Q6NTF9-3</id>
    </interactant>
    <interactant intactId="EBI-11988931">
        <id>Q96C03-3</id>
        <label>MIEF2</label>
    </interactant>
    <organismsDiffer>false</organismsDiffer>
    <experiments>3</experiments>
</comment>
<comment type="interaction">
    <interactant intactId="EBI-17589229">
        <id>Q6NTF9-3</id>
    </interactant>
    <interactant intactId="EBI-8852072">
        <id>Q9UH92-3</id>
        <label>MLX</label>
    </interactant>
    <organismsDiffer>false</organismsDiffer>
    <experiments>3</experiments>
</comment>
<comment type="interaction">
    <interactant intactId="EBI-17589229">
        <id>Q6NTF9-3</id>
    </interactant>
    <interactant intactId="EBI-2623273">
        <id>Q9H8L6</id>
        <label>MMRN2</label>
    </interactant>
    <organismsDiffer>false</organismsDiffer>
    <experiments>3</experiments>
</comment>
<comment type="interaction">
    <interactant intactId="EBI-17589229">
        <id>Q6NTF9-3</id>
    </interactant>
    <interactant intactId="EBI-719403">
        <id>O95563</id>
        <label>MPC2</label>
    </interactant>
    <organismsDiffer>false</organismsDiffer>
    <experiments>3</experiments>
</comment>
<comment type="interaction">
    <interactant intactId="EBI-17589229">
        <id>Q6NTF9-3</id>
    </interactant>
    <interactant intactId="EBI-5454865">
        <id>Q6IN84</id>
        <label>MRM1</label>
    </interactant>
    <organismsDiffer>false</organismsDiffer>
    <experiments>3</experiments>
</comment>
<comment type="interaction">
    <interactant intactId="EBI-17589229">
        <id>Q6NTF9-3</id>
    </interactant>
    <interactant intactId="EBI-17590278">
        <id>Q9NZE8-2</id>
        <label>MRPL35</label>
    </interactant>
    <organismsDiffer>false</organismsDiffer>
    <experiments>3</experiments>
</comment>
<comment type="interaction">
    <interactant intactId="EBI-17589229">
        <id>Q6NTF9-3</id>
    </interactant>
    <interactant intactId="EBI-7825321">
        <id>Q96E29</id>
        <label>MTERF3</label>
    </interactant>
    <organismsDiffer>false</organismsDiffer>
    <experiments>3</experiments>
</comment>
<comment type="interaction">
    <interactant intactId="EBI-17589229">
        <id>Q6NTF9-3</id>
    </interactant>
    <interactant intactId="EBI-709754">
        <id>Q9HB07</id>
        <label>MYG1</label>
    </interactant>
    <organismsDiffer>false</organismsDiffer>
    <experiments>3</experiments>
</comment>
<comment type="interaction">
    <interactant intactId="EBI-17589229">
        <id>Q6NTF9-3</id>
    </interactant>
    <interactant intactId="EBI-2863682">
        <id>Q9Y3Q0</id>
        <label>NAALAD2</label>
    </interactant>
    <organismsDiffer>false</organismsDiffer>
    <experiments>3</experiments>
</comment>
<comment type="interaction">
    <interactant intactId="EBI-17589229">
        <id>Q6NTF9-3</id>
    </interactant>
    <interactant intactId="EBI-10986258">
        <id>Q69YL0</id>
        <label>NCBP2AS2</label>
    </interactant>
    <organismsDiffer>false</organismsDiffer>
    <experiments>3</experiments>
</comment>
<comment type="interaction">
    <interactant intactId="EBI-17589229">
        <id>Q6NTF9-3</id>
    </interactant>
    <interactant intactId="EBI-11978907">
        <id>Q9ULP0-2</id>
        <label>NDRG4</label>
    </interactant>
    <organismsDiffer>false</organismsDiffer>
    <experiments>3</experiments>
</comment>
<comment type="interaction">
    <interactant intactId="EBI-17589229">
        <id>Q6NTF9-3</id>
    </interactant>
    <interactant intactId="EBI-725252">
        <id>Q9UMS0</id>
        <label>NFU1</label>
    </interactant>
    <organismsDiffer>false</organismsDiffer>
    <experiments>3</experiments>
</comment>
<comment type="interaction">
    <interactant intactId="EBI-17589229">
        <id>Q6NTF9-3</id>
    </interactant>
    <interactant intactId="EBI-10262547">
        <id>Q8IXM6</id>
        <label>NRM</label>
    </interactant>
    <organismsDiffer>false</organismsDiffer>
    <experiments>3</experiments>
</comment>
<comment type="interaction">
    <interactant intactId="EBI-17589229">
        <id>Q6NTF9-3</id>
    </interactant>
    <interactant intactId="EBI-741171">
        <id>Q96AL5</id>
        <label>PBX3</label>
    </interactant>
    <organismsDiffer>false</organismsDiffer>
    <experiments>3</experiments>
</comment>
<comment type="interaction">
    <interactant intactId="EBI-17589229">
        <id>Q6NTF9-3</id>
    </interactant>
    <interactant intactId="EBI-476586">
        <id>P17612</id>
        <label>PRKACA</label>
    </interactant>
    <organismsDiffer>false</organismsDiffer>
    <experiments>3</experiments>
</comment>
<comment type="interaction">
    <interactant intactId="EBI-17589229">
        <id>Q6NTF9-3</id>
    </interactant>
    <interactant intactId="EBI-746453">
        <id>P54725</id>
        <label>RAD23A</label>
    </interactant>
    <organismsDiffer>false</organismsDiffer>
    <experiments>3</experiments>
</comment>
<comment type="interaction">
    <interactant intactId="EBI-17589229">
        <id>Q6NTF9-3</id>
    </interactant>
    <interactant intactId="EBI-396669">
        <id>Q9Y3C5</id>
        <label>RNF11</label>
    </interactant>
    <organismsDiffer>false</organismsDiffer>
    <experiments>3</experiments>
</comment>
<comment type="interaction">
    <interactant intactId="EBI-17589229">
        <id>Q6NTF9-3</id>
    </interactant>
    <interactant intactId="EBI-11909831">
        <id>P60602</id>
        <label>ROMO1</label>
    </interactant>
    <organismsDiffer>false</organismsDiffer>
    <experiments>3</experiments>
</comment>
<comment type="interaction">
    <interactant intactId="EBI-17589229">
        <id>Q6NTF9-3</id>
    </interactant>
    <interactant intactId="EBI-12736320">
        <id>Q8WXG1</id>
        <label>RSAD2</label>
    </interactant>
    <organismsDiffer>false</organismsDiffer>
    <experiments>3</experiments>
</comment>
<comment type="interaction">
    <interactant intactId="EBI-17589229">
        <id>Q6NTF9-3</id>
    </interactant>
    <interactant intactId="EBI-9057632">
        <id>Q96QR1</id>
        <label>SCGB3A1</label>
    </interactant>
    <organismsDiffer>false</organismsDiffer>
    <experiments>3</experiments>
</comment>
<comment type="interaction">
    <interactant intactId="EBI-17589229">
        <id>Q6NTF9-3</id>
    </interactant>
    <interactant intactId="EBI-1224553">
        <id>O14521</id>
        <label>SDHD</label>
    </interactant>
    <organismsDiffer>false</organismsDiffer>
    <experiments>3</experiments>
</comment>
<comment type="interaction">
    <interactant intactId="EBI-17589229">
        <id>Q6NTF9-3</id>
    </interactant>
    <interactant intactId="EBI-350723">
        <id>P50454</id>
        <label>SERPINH1</label>
    </interactant>
    <organismsDiffer>false</organismsDiffer>
    <experiments>3</experiments>
</comment>
<comment type="interaction">
    <interactant intactId="EBI-17589229">
        <id>Q6NTF9-3</id>
    </interactant>
    <interactant intactId="EBI-17590310">
        <id>Q9BXI2</id>
        <label>SLC25A2</label>
    </interactant>
    <organismsDiffer>false</organismsDiffer>
    <experiments>3</experiments>
</comment>
<comment type="interaction">
    <interactant intactId="EBI-17589229">
        <id>Q6NTF9-3</id>
    </interactant>
    <interactant intactId="EBI-5456178">
        <id>Q00325-2</id>
        <label>SLC25A3</label>
    </interactant>
    <organismsDiffer>false</organismsDiffer>
    <experiments>3</experiments>
</comment>
<comment type="interaction">
    <interactant intactId="EBI-17589229">
        <id>Q6NTF9-3</id>
    </interactant>
    <interactant intactId="EBI-4401902">
        <id>O15079</id>
        <label>SNPH</label>
    </interactant>
    <organismsDiffer>false</organismsDiffer>
    <experiments>3</experiments>
</comment>
<comment type="interaction">
    <interactant intactId="EBI-17589229">
        <id>Q6NTF9-3</id>
    </interactant>
    <interactant intactId="EBI-10238936">
        <id>Q17RD7</id>
        <label>SYT16</label>
    </interactant>
    <organismsDiffer>false</organismsDiffer>
    <experiments>3</experiments>
</comment>
<comment type="interaction">
    <interactant intactId="EBI-17589229">
        <id>Q6NTF9-3</id>
    </interactant>
    <interactant intactId="EBI-10278496">
        <id>Q53QW1</id>
        <label>TEX44</label>
    </interactant>
    <organismsDiffer>false</organismsDiffer>
    <experiments>3</experiments>
</comment>
<comment type="interaction">
    <interactant intactId="EBI-17589229">
        <id>Q6NTF9-3</id>
    </interactant>
    <interactant intactId="EBI-296151">
        <id>P37173</id>
        <label>TGFBR2</label>
    </interactant>
    <organismsDiffer>false</organismsDiffer>
    <experiments>3</experiments>
</comment>
<comment type="interaction">
    <interactant intactId="EBI-17589229">
        <id>Q6NTF9-3</id>
    </interactant>
    <interactant intactId="EBI-941422">
        <id>P07204</id>
        <label>THBD</label>
    </interactant>
    <organismsDiffer>false</organismsDiffer>
    <experiments>3</experiments>
</comment>
<comment type="interaction">
    <interactant intactId="EBI-17589229">
        <id>Q6NTF9-3</id>
    </interactant>
    <interactant intactId="EBI-2372529">
        <id>O60830</id>
        <label>TIMM17B</label>
    </interactant>
    <organismsDiffer>false</organismsDiffer>
    <experiments>3</experiments>
</comment>
<comment type="interaction">
    <interactant intactId="EBI-17589229">
        <id>Q6NTF9-3</id>
    </interactant>
    <interactant intactId="EBI-17249488">
        <id>Q6ZUI0</id>
        <label>TPRG1</label>
    </interactant>
    <organismsDiffer>false</organismsDiffer>
    <experiments>3</experiments>
</comment>
<comment type="interaction">
    <interactant intactId="EBI-17589229">
        <id>Q6NTF9-3</id>
    </interactant>
    <interactant intactId="EBI-358058">
        <id>Q2NL82</id>
        <label>TSR1</label>
    </interactant>
    <organismsDiffer>false</organismsDiffer>
    <experiments>3</experiments>
</comment>
<comment type="interaction">
    <interactant intactId="EBI-17589229">
        <id>Q6NTF9-3</id>
    </interactant>
    <interactant intactId="EBI-12261790">
        <id>A0A384ME17</id>
        <label>TUFM</label>
    </interactant>
    <organismsDiffer>false</organismsDiffer>
    <experiments>3</experiments>
</comment>
<comment type="interaction">
    <interactant intactId="EBI-17589229">
        <id>Q6NTF9-3</id>
    </interactant>
    <interactant intactId="EBI-11026619">
        <id>Q05086-3</id>
        <label>UBE3A</label>
    </interactant>
    <organismsDiffer>false</organismsDiffer>
    <experiments>3</experiments>
</comment>
<comment type="interaction">
    <interactant intactId="EBI-17589229">
        <id>Q6NTF9-3</id>
    </interactant>
    <interactant intactId="EBI-2512374">
        <id>Q70CQ3</id>
        <label>USP30</label>
    </interactant>
    <organismsDiffer>false</organismsDiffer>
    <experiments>3</experiments>
</comment>
<comment type="interaction">
    <interactant intactId="EBI-17589229">
        <id>Q6NTF9-3</id>
    </interactant>
    <interactant intactId="EBI-720609">
        <id>O76024</id>
        <label>WFS1</label>
    </interactant>
    <organismsDiffer>false</organismsDiffer>
    <experiments>3</experiments>
</comment>
<comment type="subcellular location">
    <subcellularLocation>
        <location evidence="1">Golgi apparatus</location>
        <location evidence="1">cis-Golgi network membrane</location>
        <topology evidence="1">Multi-pass membrane protein</topology>
    </subcellularLocation>
</comment>
<comment type="alternative products">
    <event type="alternative splicing"/>
    <isoform>
        <id>Q6NTF9-1</id>
        <name>1</name>
        <sequence type="displayed"/>
    </isoform>
    <isoform>
        <id>Q6NTF9-2</id>
        <name>2</name>
        <sequence type="described" ref="VSP_055407"/>
    </isoform>
    <isoform>
        <id>Q6NTF9-3</id>
        <name>3</name>
        <sequence type="described" ref="VSP_055608"/>
    </isoform>
</comment>
<comment type="similarity">
    <text evidence="8">Belongs to the peptidase S54 family.</text>
</comment>
<comment type="caution">
    <text evidence="8">Although strongly related to the peptidase S54 family, it lacks the conserved active sites, suggesting that it has no peptidase activity.</text>
</comment>
<comment type="sequence caution" evidence="8">
    <conflict type="frameshift">
        <sequence resource="EMBL-CDS" id="AAG09733"/>
    </conflict>
</comment>
<comment type="sequence caution" evidence="8">
    <conflict type="erroneous initiation">
        <sequence resource="EMBL-CDS" id="AAH06234"/>
    </conflict>
    <text>Extended N-terminus.</text>
</comment>
<reference key="1">
    <citation type="submission" date="2000-01" db="EMBL/GenBank/DDBJ databases">
        <authorList>
            <person name="Xiao H."/>
            <person name="Song H."/>
            <person name="Gao G."/>
            <person name="Ren S."/>
            <person name="Chen Z."/>
            <person name="Han Z."/>
        </authorList>
    </citation>
    <scope>NUCLEOTIDE SEQUENCE [MRNA] (ISOFORM 2)</scope>
    <source>
        <tissue>Pituitary</tissue>
    </source>
</reference>
<reference key="2">
    <citation type="journal article" date="2004" name="Nat. Genet.">
        <title>Complete sequencing and characterization of 21,243 full-length human cDNAs.</title>
        <authorList>
            <person name="Ota T."/>
            <person name="Suzuki Y."/>
            <person name="Nishikawa T."/>
            <person name="Otsuki T."/>
            <person name="Sugiyama T."/>
            <person name="Irie R."/>
            <person name="Wakamatsu A."/>
            <person name="Hayashi K."/>
            <person name="Sato H."/>
            <person name="Nagai K."/>
            <person name="Kimura K."/>
            <person name="Makita H."/>
            <person name="Sekine M."/>
            <person name="Obayashi M."/>
            <person name="Nishi T."/>
            <person name="Shibahara T."/>
            <person name="Tanaka T."/>
            <person name="Ishii S."/>
            <person name="Yamamoto J."/>
            <person name="Saito K."/>
            <person name="Kawai Y."/>
            <person name="Isono Y."/>
            <person name="Nakamura Y."/>
            <person name="Nagahari K."/>
            <person name="Murakami K."/>
            <person name="Yasuda T."/>
            <person name="Iwayanagi T."/>
            <person name="Wagatsuma M."/>
            <person name="Shiratori A."/>
            <person name="Sudo H."/>
            <person name="Hosoiri T."/>
            <person name="Kaku Y."/>
            <person name="Kodaira H."/>
            <person name="Kondo H."/>
            <person name="Sugawara M."/>
            <person name="Takahashi M."/>
            <person name="Kanda K."/>
            <person name="Yokoi T."/>
            <person name="Furuya T."/>
            <person name="Kikkawa E."/>
            <person name="Omura Y."/>
            <person name="Abe K."/>
            <person name="Kamihara K."/>
            <person name="Katsuta N."/>
            <person name="Sato K."/>
            <person name="Tanikawa M."/>
            <person name="Yamazaki M."/>
            <person name="Ninomiya K."/>
            <person name="Ishibashi T."/>
            <person name="Yamashita H."/>
            <person name="Murakawa K."/>
            <person name="Fujimori K."/>
            <person name="Tanai H."/>
            <person name="Kimata M."/>
            <person name="Watanabe M."/>
            <person name="Hiraoka S."/>
            <person name="Chiba Y."/>
            <person name="Ishida S."/>
            <person name="Ono Y."/>
            <person name="Takiguchi S."/>
            <person name="Watanabe S."/>
            <person name="Yosida M."/>
            <person name="Hotuta T."/>
            <person name="Kusano J."/>
            <person name="Kanehori K."/>
            <person name="Takahashi-Fujii A."/>
            <person name="Hara H."/>
            <person name="Tanase T.-O."/>
            <person name="Nomura Y."/>
            <person name="Togiya S."/>
            <person name="Komai F."/>
            <person name="Hara R."/>
            <person name="Takeuchi K."/>
            <person name="Arita M."/>
            <person name="Imose N."/>
            <person name="Musashino K."/>
            <person name="Yuuki H."/>
            <person name="Oshima A."/>
            <person name="Sasaki N."/>
            <person name="Aotsuka S."/>
            <person name="Yoshikawa Y."/>
            <person name="Matsunawa H."/>
            <person name="Ichihara T."/>
            <person name="Shiohata N."/>
            <person name="Sano S."/>
            <person name="Moriya S."/>
            <person name="Momiyama H."/>
            <person name="Satoh N."/>
            <person name="Takami S."/>
            <person name="Terashima Y."/>
            <person name="Suzuki O."/>
            <person name="Nakagawa S."/>
            <person name="Senoh A."/>
            <person name="Mizoguchi H."/>
            <person name="Goto Y."/>
            <person name="Shimizu F."/>
            <person name="Wakebe H."/>
            <person name="Hishigaki H."/>
            <person name="Watanabe T."/>
            <person name="Sugiyama A."/>
            <person name="Takemoto M."/>
            <person name="Kawakami B."/>
            <person name="Yamazaki M."/>
            <person name="Watanabe K."/>
            <person name="Kumagai A."/>
            <person name="Itakura S."/>
            <person name="Fukuzumi Y."/>
            <person name="Fujimori Y."/>
            <person name="Komiyama M."/>
            <person name="Tashiro H."/>
            <person name="Tanigami A."/>
            <person name="Fujiwara T."/>
            <person name="Ono T."/>
            <person name="Yamada K."/>
            <person name="Fujii Y."/>
            <person name="Ozaki K."/>
            <person name="Hirao M."/>
            <person name="Ohmori Y."/>
            <person name="Kawabata A."/>
            <person name="Hikiji T."/>
            <person name="Kobatake N."/>
            <person name="Inagaki H."/>
            <person name="Ikema Y."/>
            <person name="Okamoto S."/>
            <person name="Okitani R."/>
            <person name="Kawakami T."/>
            <person name="Noguchi S."/>
            <person name="Itoh T."/>
            <person name="Shigeta K."/>
            <person name="Senba T."/>
            <person name="Matsumura K."/>
            <person name="Nakajima Y."/>
            <person name="Mizuno T."/>
            <person name="Morinaga M."/>
            <person name="Sasaki M."/>
            <person name="Togashi T."/>
            <person name="Oyama M."/>
            <person name="Hata H."/>
            <person name="Watanabe M."/>
            <person name="Komatsu T."/>
            <person name="Mizushima-Sugano J."/>
            <person name="Satoh T."/>
            <person name="Shirai Y."/>
            <person name="Takahashi Y."/>
            <person name="Nakagawa K."/>
            <person name="Okumura K."/>
            <person name="Nagase T."/>
            <person name="Nomura N."/>
            <person name="Kikuchi H."/>
            <person name="Masuho Y."/>
            <person name="Yamashita R."/>
            <person name="Nakai K."/>
            <person name="Yada T."/>
            <person name="Nakamura Y."/>
            <person name="Ohara O."/>
            <person name="Isogai T."/>
            <person name="Sugano S."/>
        </authorList>
    </citation>
    <scope>NUCLEOTIDE SEQUENCE [LARGE SCALE MRNA] (ISOFORM 3)</scope>
</reference>
<reference key="3">
    <citation type="journal article" date="2003" name="Nature">
        <title>The DNA sequence of human chromosome 7.</title>
        <authorList>
            <person name="Hillier L.W."/>
            <person name="Fulton R.S."/>
            <person name="Fulton L.A."/>
            <person name="Graves T.A."/>
            <person name="Pepin K.H."/>
            <person name="Wagner-McPherson C."/>
            <person name="Layman D."/>
            <person name="Maas J."/>
            <person name="Jaeger S."/>
            <person name="Walker R."/>
            <person name="Wylie K."/>
            <person name="Sekhon M."/>
            <person name="Becker M.C."/>
            <person name="O'Laughlin M.D."/>
            <person name="Schaller M.E."/>
            <person name="Fewell G.A."/>
            <person name="Delehaunty K.D."/>
            <person name="Miner T.L."/>
            <person name="Nash W.E."/>
            <person name="Cordes M."/>
            <person name="Du H."/>
            <person name="Sun H."/>
            <person name="Edwards J."/>
            <person name="Bradshaw-Cordum H."/>
            <person name="Ali J."/>
            <person name="Andrews S."/>
            <person name="Isak A."/>
            <person name="Vanbrunt A."/>
            <person name="Nguyen C."/>
            <person name="Du F."/>
            <person name="Lamar B."/>
            <person name="Courtney L."/>
            <person name="Kalicki J."/>
            <person name="Ozersky P."/>
            <person name="Bielicki L."/>
            <person name="Scott K."/>
            <person name="Holmes A."/>
            <person name="Harkins R."/>
            <person name="Harris A."/>
            <person name="Strong C.M."/>
            <person name="Hou S."/>
            <person name="Tomlinson C."/>
            <person name="Dauphin-Kohlberg S."/>
            <person name="Kozlowicz-Reilly A."/>
            <person name="Leonard S."/>
            <person name="Rohlfing T."/>
            <person name="Rock S.M."/>
            <person name="Tin-Wollam A.-M."/>
            <person name="Abbott A."/>
            <person name="Minx P."/>
            <person name="Maupin R."/>
            <person name="Strowmatt C."/>
            <person name="Latreille P."/>
            <person name="Miller N."/>
            <person name="Johnson D."/>
            <person name="Murray J."/>
            <person name="Woessner J.P."/>
            <person name="Wendl M.C."/>
            <person name="Yang S.-P."/>
            <person name="Schultz B.R."/>
            <person name="Wallis J.W."/>
            <person name="Spieth J."/>
            <person name="Bieri T.A."/>
            <person name="Nelson J.O."/>
            <person name="Berkowicz N."/>
            <person name="Wohldmann P.E."/>
            <person name="Cook L.L."/>
            <person name="Hickenbotham M.T."/>
            <person name="Eldred J."/>
            <person name="Williams D."/>
            <person name="Bedell J.A."/>
            <person name="Mardis E.R."/>
            <person name="Clifton S.W."/>
            <person name="Chissoe S.L."/>
            <person name="Marra M.A."/>
            <person name="Raymond C."/>
            <person name="Haugen E."/>
            <person name="Gillett W."/>
            <person name="Zhou Y."/>
            <person name="James R."/>
            <person name="Phelps K."/>
            <person name="Iadanoto S."/>
            <person name="Bubb K."/>
            <person name="Simms E."/>
            <person name="Levy R."/>
            <person name="Clendenning J."/>
            <person name="Kaul R."/>
            <person name="Kent W.J."/>
            <person name="Furey T.S."/>
            <person name="Baertsch R.A."/>
            <person name="Brent M.R."/>
            <person name="Keibler E."/>
            <person name="Flicek P."/>
            <person name="Bork P."/>
            <person name="Suyama M."/>
            <person name="Bailey J.A."/>
            <person name="Portnoy M.E."/>
            <person name="Torrents D."/>
            <person name="Chinwalla A.T."/>
            <person name="Gish W.R."/>
            <person name="Eddy S.R."/>
            <person name="McPherson J.D."/>
            <person name="Olson M.V."/>
            <person name="Eichler E.E."/>
            <person name="Green E.D."/>
            <person name="Waterston R.H."/>
            <person name="Wilson R.K."/>
        </authorList>
    </citation>
    <scope>NUCLEOTIDE SEQUENCE [LARGE SCALE GENOMIC DNA]</scope>
</reference>
<reference key="4">
    <citation type="journal article" date="2004" name="Genome Res.">
        <title>The status, quality, and expansion of the NIH full-length cDNA project: the Mammalian Gene Collection (MGC).</title>
        <authorList>
            <consortium name="The MGC Project Team"/>
        </authorList>
    </citation>
    <scope>NUCLEOTIDE SEQUENCE [LARGE SCALE MRNA] (ISOFORMS 1 AND 3)</scope>
    <source>
        <tissue>Brain</tissue>
        <tissue>Ovary</tissue>
    </source>
</reference>
<reference key="5">
    <citation type="journal article" date="2013" name="J. Biol. Chem.">
        <title>Dynamics of the rhomboid-like protein RHBDD2 expression in mouse retina and involvement of its human ortholog in retinitis pigmentosa.</title>
        <authorList>
            <person name="Ahmedli N.B."/>
            <person name="Gribanova Y."/>
            <person name="Njoku C.C."/>
            <person name="Naidu A."/>
            <person name="Young A."/>
            <person name="Mendoza E."/>
            <person name="Yamashita C.K."/>
            <person name="Ozgul R.K."/>
            <person name="Johnson J.E."/>
            <person name="Fox D.A."/>
            <person name="Farber D.B."/>
        </authorList>
    </citation>
    <scope>VARIANT HIS-85</scope>
</reference>
<dbReference type="EMBL" id="AF226732">
    <property type="protein sequence ID" value="AAG09733.1"/>
    <property type="status" value="ALT_FRAME"/>
    <property type="molecule type" value="mRNA"/>
</dbReference>
<dbReference type="EMBL" id="AK026590">
    <property type="protein sequence ID" value="BAB15503.1"/>
    <property type="molecule type" value="mRNA"/>
</dbReference>
<dbReference type="EMBL" id="AC005067">
    <property type="protein sequence ID" value="AAD45960.1"/>
    <property type="molecule type" value="Genomic_DNA"/>
</dbReference>
<dbReference type="EMBL" id="BC006234">
    <property type="protein sequence ID" value="AAH06234.2"/>
    <property type="status" value="ALT_INIT"/>
    <property type="molecule type" value="mRNA"/>
</dbReference>
<dbReference type="EMBL" id="BC069017">
    <property type="protein sequence ID" value="AAH69017.1"/>
    <property type="molecule type" value="mRNA"/>
</dbReference>
<dbReference type="CCDS" id="CCDS43602.1">
    <molecule id="Q6NTF9-1"/>
</dbReference>
<dbReference type="CCDS" id="CCDS43603.1">
    <molecule id="Q6NTF9-3"/>
</dbReference>
<dbReference type="RefSeq" id="NP_001035546.1">
    <molecule id="Q6NTF9-1"/>
    <property type="nucleotide sequence ID" value="NM_001040456.3"/>
</dbReference>
<dbReference type="RefSeq" id="NP_001035547.1">
    <molecule id="Q6NTF9-3"/>
    <property type="nucleotide sequence ID" value="NM_001040457.3"/>
</dbReference>
<dbReference type="RefSeq" id="NP_001333115.1">
    <molecule id="Q6NTF9-3"/>
    <property type="nucleotide sequence ID" value="NM_001346186.2"/>
</dbReference>
<dbReference type="RefSeq" id="NP_001333116.1">
    <molecule id="Q6NTF9-3"/>
    <property type="nucleotide sequence ID" value="NM_001346187.2"/>
</dbReference>
<dbReference type="RefSeq" id="NP_001333117.1">
    <property type="nucleotide sequence ID" value="NM_001346188.1"/>
</dbReference>
<dbReference type="RefSeq" id="XP_005250568.1">
    <property type="nucleotide sequence ID" value="XM_005250511.4"/>
</dbReference>
<dbReference type="RefSeq" id="XP_047276611.1">
    <molecule id="Q6NTF9-3"/>
    <property type="nucleotide sequence ID" value="XM_047420655.1"/>
</dbReference>
<dbReference type="RefSeq" id="XP_054214681.1">
    <molecule id="Q6NTF9-3"/>
    <property type="nucleotide sequence ID" value="XM_054358706.1"/>
</dbReference>
<dbReference type="BioGRID" id="121515">
    <property type="interactions" value="126"/>
</dbReference>
<dbReference type="FunCoup" id="Q6NTF9">
    <property type="interactions" value="606"/>
</dbReference>
<dbReference type="IntAct" id="Q6NTF9">
    <property type="interactions" value="90"/>
</dbReference>
<dbReference type="MINT" id="Q6NTF9"/>
<dbReference type="STRING" id="9606.ENSP00000006777"/>
<dbReference type="MEROPS" id="S54.955"/>
<dbReference type="TCDB" id="9.B.104.4.4">
    <property type="family name" value="the rhomboid protease (rhomboid) family"/>
</dbReference>
<dbReference type="GlyGen" id="Q6NTF9">
    <property type="glycosylation" value="2 sites, 1 O-linked glycan (1 site)"/>
</dbReference>
<dbReference type="iPTMnet" id="Q6NTF9"/>
<dbReference type="PhosphoSitePlus" id="Q6NTF9"/>
<dbReference type="SwissPalm" id="Q6NTF9"/>
<dbReference type="BioMuta" id="RHBDD2"/>
<dbReference type="DMDM" id="118595708"/>
<dbReference type="jPOST" id="Q6NTF9"/>
<dbReference type="MassIVE" id="Q6NTF9"/>
<dbReference type="PaxDb" id="9606-ENSP00000006777"/>
<dbReference type="PeptideAtlas" id="Q6NTF9"/>
<dbReference type="ProteomicsDB" id="66673">
    <molecule id="Q6NTF9-1"/>
</dbReference>
<dbReference type="Pumba" id="Q6NTF9"/>
<dbReference type="Antibodypedia" id="48862">
    <property type="antibodies" value="41 antibodies from 18 providers"/>
</dbReference>
<dbReference type="DNASU" id="57414"/>
<dbReference type="Ensembl" id="ENST00000006777.11">
    <molecule id="Q6NTF9-1"/>
    <property type="protein sequence ID" value="ENSP00000006777.6"/>
    <property type="gene ID" value="ENSG00000005486.17"/>
</dbReference>
<dbReference type="Ensembl" id="ENST00000318622.8">
    <molecule id="Q6NTF9-3"/>
    <property type="protein sequence ID" value="ENSP00000314144.4"/>
    <property type="gene ID" value="ENSG00000005486.17"/>
</dbReference>
<dbReference type="Ensembl" id="ENST00000428119.1">
    <molecule id="Q6NTF9-3"/>
    <property type="protein sequence ID" value="ENSP00000391232.1"/>
    <property type="gene ID" value="ENSG00000005486.17"/>
</dbReference>
<dbReference type="GeneID" id="57414"/>
<dbReference type="KEGG" id="hsa:57414"/>
<dbReference type="MANE-Select" id="ENST00000006777.11">
    <property type="protein sequence ID" value="ENSP00000006777.6"/>
    <property type="RefSeq nucleotide sequence ID" value="NM_001040456.3"/>
    <property type="RefSeq protein sequence ID" value="NP_001035546.1"/>
</dbReference>
<dbReference type="UCSC" id="uc003udv.1">
    <molecule id="Q6NTF9-1"/>
    <property type="organism name" value="human"/>
</dbReference>
<dbReference type="AGR" id="HGNC:23082"/>
<dbReference type="CTD" id="57414"/>
<dbReference type="DisGeNET" id="57414"/>
<dbReference type="GeneCards" id="RHBDD2"/>
<dbReference type="HGNC" id="HGNC:23082">
    <property type="gene designation" value="RHBDD2"/>
</dbReference>
<dbReference type="HPA" id="ENSG00000005486">
    <property type="expression patterns" value="Tissue enhanced (brain, choroid plexus)"/>
</dbReference>
<dbReference type="MIM" id="615203">
    <property type="type" value="gene"/>
</dbReference>
<dbReference type="neXtProt" id="NX_Q6NTF9"/>
<dbReference type="OpenTargets" id="ENSG00000005486"/>
<dbReference type="PharmGKB" id="PA134864375"/>
<dbReference type="VEuPathDB" id="HostDB:ENSG00000005486"/>
<dbReference type="eggNOG" id="KOG2632">
    <property type="taxonomic scope" value="Eukaryota"/>
</dbReference>
<dbReference type="GeneTree" id="ENSGT00390000000699"/>
<dbReference type="HOGENOM" id="CLU_064872_1_0_1"/>
<dbReference type="InParanoid" id="Q6NTF9"/>
<dbReference type="OMA" id="GAVIIWR"/>
<dbReference type="OrthoDB" id="10257275at2759"/>
<dbReference type="PAN-GO" id="Q6NTF9">
    <property type="GO annotations" value="6 GO annotations based on evolutionary models"/>
</dbReference>
<dbReference type="PhylomeDB" id="Q6NTF9"/>
<dbReference type="TreeFam" id="TF335461"/>
<dbReference type="PathwayCommons" id="Q6NTF9"/>
<dbReference type="SignaLink" id="Q6NTF9"/>
<dbReference type="BioGRID-ORCS" id="57414">
    <property type="hits" value="11 hits in 1156 CRISPR screens"/>
</dbReference>
<dbReference type="ChiTaRS" id="RHBDD2">
    <property type="organism name" value="human"/>
</dbReference>
<dbReference type="GenomeRNAi" id="57414"/>
<dbReference type="Pharos" id="Q6NTF9">
    <property type="development level" value="Tbio"/>
</dbReference>
<dbReference type="PRO" id="PR:Q6NTF9"/>
<dbReference type="Proteomes" id="UP000005640">
    <property type="component" value="Chromosome 7"/>
</dbReference>
<dbReference type="RNAct" id="Q6NTF9">
    <property type="molecule type" value="protein"/>
</dbReference>
<dbReference type="Bgee" id="ENSG00000005486">
    <property type="expression patterns" value="Expressed in adenohypophysis and 170 other cell types or tissues"/>
</dbReference>
<dbReference type="ExpressionAtlas" id="Q6NTF9">
    <property type="expression patterns" value="baseline and differential"/>
</dbReference>
<dbReference type="GO" id="GO:0005789">
    <property type="term" value="C:endoplasmic reticulum membrane"/>
    <property type="evidence" value="ECO:0000318"/>
    <property type="project" value="GO_Central"/>
</dbReference>
<dbReference type="GO" id="GO:0005794">
    <property type="term" value="C:Golgi apparatus"/>
    <property type="evidence" value="ECO:0000314"/>
    <property type="project" value="HPA"/>
</dbReference>
<dbReference type="GO" id="GO:0000139">
    <property type="term" value="C:Golgi membrane"/>
    <property type="evidence" value="ECO:0007669"/>
    <property type="project" value="Ensembl"/>
</dbReference>
<dbReference type="GO" id="GO:0005654">
    <property type="term" value="C:nucleoplasm"/>
    <property type="evidence" value="ECO:0000314"/>
    <property type="project" value="HPA"/>
</dbReference>
<dbReference type="GO" id="GO:0048471">
    <property type="term" value="C:perinuclear region of cytoplasm"/>
    <property type="evidence" value="ECO:0007669"/>
    <property type="project" value="Ensembl"/>
</dbReference>
<dbReference type="GO" id="GO:0004252">
    <property type="term" value="F:serine-type endopeptidase activity"/>
    <property type="evidence" value="ECO:0007669"/>
    <property type="project" value="InterPro"/>
</dbReference>
<dbReference type="GO" id="GO:0005047">
    <property type="term" value="F:signal recognition particle binding"/>
    <property type="evidence" value="ECO:0000318"/>
    <property type="project" value="GO_Central"/>
</dbReference>
<dbReference type="GO" id="GO:0030968">
    <property type="term" value="P:endoplasmic reticulum unfolded protein response"/>
    <property type="evidence" value="ECO:0000318"/>
    <property type="project" value="GO_Central"/>
</dbReference>
<dbReference type="GO" id="GO:0036503">
    <property type="term" value="P:ERAD pathway"/>
    <property type="evidence" value="ECO:0000318"/>
    <property type="project" value="GO_Central"/>
</dbReference>
<dbReference type="FunFam" id="1.20.1540.10:FF:000011">
    <property type="entry name" value="Putative rhomboid domain-containing protein 2"/>
    <property type="match status" value="1"/>
</dbReference>
<dbReference type="Gene3D" id="1.20.1540.10">
    <property type="entry name" value="Rhomboid-like"/>
    <property type="match status" value="1"/>
</dbReference>
<dbReference type="InterPro" id="IPR022764">
    <property type="entry name" value="Peptidase_S54_rhomboid_dom"/>
</dbReference>
<dbReference type="InterPro" id="IPR035952">
    <property type="entry name" value="Rhomboid-like_sf"/>
</dbReference>
<dbReference type="PANTHER" id="PTHR11009">
    <property type="entry name" value="DER1-LIKE PROTEIN, DERLIN"/>
    <property type="match status" value="1"/>
</dbReference>
<dbReference type="Pfam" id="PF01694">
    <property type="entry name" value="Rhomboid"/>
    <property type="match status" value="1"/>
</dbReference>
<dbReference type="SUPFAM" id="SSF144091">
    <property type="entry name" value="Rhomboid-like"/>
    <property type="match status" value="1"/>
</dbReference>
<feature type="chain" id="PRO_0000254596" description="Rhomboid domain-containing protein 2">
    <location>
        <begin position="1"/>
        <end position="364"/>
    </location>
</feature>
<feature type="transmembrane region" description="Helical" evidence="2">
    <location>
        <begin position="11"/>
        <end position="31"/>
    </location>
</feature>
<feature type="transmembrane region" description="Helical" evidence="2">
    <location>
        <begin position="63"/>
        <end position="83"/>
    </location>
</feature>
<feature type="transmembrane region" description="Helical" evidence="2">
    <location>
        <begin position="100"/>
        <end position="120"/>
    </location>
</feature>
<feature type="transmembrane region" description="Helical" evidence="2">
    <location>
        <begin position="158"/>
        <end position="178"/>
    </location>
</feature>
<feature type="transmembrane region" description="Helical" evidence="2">
    <location>
        <begin position="184"/>
        <end position="204"/>
    </location>
</feature>
<feature type="region of interest" description="Disordered" evidence="3">
    <location>
        <begin position="242"/>
        <end position="282"/>
    </location>
</feature>
<feature type="region of interest" description="Disordered" evidence="3">
    <location>
        <begin position="317"/>
        <end position="364"/>
    </location>
</feature>
<feature type="compositionally biased region" description="Polar residues" evidence="3">
    <location>
        <begin position="267"/>
        <end position="276"/>
    </location>
</feature>
<feature type="compositionally biased region" description="Polar residues" evidence="3">
    <location>
        <begin position="317"/>
        <end position="329"/>
    </location>
</feature>
<feature type="splice variant" id="VSP_055608" description="In isoform 3." evidence="5 6">
    <location>
        <begin position="1"/>
        <end position="141"/>
    </location>
</feature>
<feature type="splice variant" id="VSP_055407" description="In isoform 2." evidence="7">
    <original>M</original>
    <variation>MGRGLWEAWPPAGSSAVAKGNCREEAEGAEDRQPASRRGAGTTAAM</variation>
    <location>
        <position position="1"/>
    </location>
</feature>
<feature type="sequence variant" id="VAR_051581" description="In dbSNP:rs11547498." evidence="4">
    <original>R</original>
    <variation>H</variation>
    <location>
        <position position="85"/>
    </location>
</feature>
<feature type="sequence conflict" description="In Ref. 2; BAB15503." evidence="8" ref="2">
    <original>A</original>
    <variation>S</variation>
    <location>
        <position position="2"/>
    </location>
</feature>
<feature type="sequence conflict" description="In Ref. 4; AAH69017." evidence="8" ref="4">
    <original>L</original>
    <variation>P</variation>
    <location>
        <position position="77"/>
    </location>
</feature>
<organism>
    <name type="scientific">Homo sapiens</name>
    <name type="common">Human</name>
    <dbReference type="NCBI Taxonomy" id="9606"/>
    <lineage>
        <taxon>Eukaryota</taxon>
        <taxon>Metazoa</taxon>
        <taxon>Chordata</taxon>
        <taxon>Craniata</taxon>
        <taxon>Vertebrata</taxon>
        <taxon>Euteleostomi</taxon>
        <taxon>Mammalia</taxon>
        <taxon>Eutheria</taxon>
        <taxon>Euarchontoglires</taxon>
        <taxon>Primates</taxon>
        <taxon>Haplorrhini</taxon>
        <taxon>Catarrhini</taxon>
        <taxon>Hominidae</taxon>
        <taxon>Homo</taxon>
    </lineage>
</organism>
<proteinExistence type="evidence at protein level"/>
<evidence type="ECO:0000250" key="1"/>
<evidence type="ECO:0000255" key="2"/>
<evidence type="ECO:0000256" key="3">
    <source>
        <dbReference type="SAM" id="MobiDB-lite"/>
    </source>
</evidence>
<evidence type="ECO:0000269" key="4">
    <source>
    </source>
</evidence>
<evidence type="ECO:0000303" key="5">
    <source>
    </source>
</evidence>
<evidence type="ECO:0000303" key="6">
    <source>
    </source>
</evidence>
<evidence type="ECO:0000303" key="7">
    <source ref="1"/>
</evidence>
<evidence type="ECO:0000305" key="8"/>
<protein>
    <recommendedName>
        <fullName>Rhomboid domain-containing protein 2</fullName>
    </recommendedName>
</protein>
<sequence length="364" mass="39202">MAASGPGCRSWCLCPEVPSATFFTALLSLLVSGPRLFLLQQPLAPSGLTLKSEALRNWQVYRLVTYIFVYENPISLLCGAIIIWRFAGNFERTVGTVRHCFFTVIFAIFSAIIFLSFEAVSSLSKLGEVEDARGFTPVAFAMLGVTTVRSRMRRALVFGMVVPSVLVPWLLLGASWLIPQTSFLSNVCGLSIGLAYGLTYCYSIDLSERVALKLDQTFPFSLMRRISVFKYVSGSSAERRAAQSRKLNPVPGSYPTQSCHPHLSPSHPVSQTQHASGQKLASWPSCTPGHMPTLPPYQPASGLCYVQNHFGPNPTSSSVYPASAGTSLGIQPPTPVNSPGTVYSGALGTPGAAGSKESSRVPMP</sequence>
<gene>
    <name type="primary">RHBDD2</name>
    <name type="synonym">RHBDL7</name>
</gene>